<protein>
    <recommendedName>
        <fullName evidence="1">Large ribosomal subunit protein uL24</fullName>
    </recommendedName>
    <alternativeName>
        <fullName evidence="2">50S ribosomal protein L24</fullName>
    </alternativeName>
</protein>
<dbReference type="EMBL" id="CP000922">
    <property type="protein sequence ID" value="ACJ32500.1"/>
    <property type="molecule type" value="Genomic_DNA"/>
</dbReference>
<dbReference type="RefSeq" id="WP_012573859.1">
    <property type="nucleotide sequence ID" value="NC_011567.1"/>
</dbReference>
<dbReference type="SMR" id="B7GJ78"/>
<dbReference type="STRING" id="491915.Aflv_0116"/>
<dbReference type="GeneID" id="7036315"/>
<dbReference type="KEGG" id="afl:Aflv_0116"/>
<dbReference type="PATRIC" id="fig|491915.6.peg.116"/>
<dbReference type="eggNOG" id="COG0198">
    <property type="taxonomic scope" value="Bacteria"/>
</dbReference>
<dbReference type="HOGENOM" id="CLU_093315_2_0_9"/>
<dbReference type="Proteomes" id="UP000000742">
    <property type="component" value="Chromosome"/>
</dbReference>
<dbReference type="GO" id="GO:1990904">
    <property type="term" value="C:ribonucleoprotein complex"/>
    <property type="evidence" value="ECO:0007669"/>
    <property type="project" value="UniProtKB-KW"/>
</dbReference>
<dbReference type="GO" id="GO:0005840">
    <property type="term" value="C:ribosome"/>
    <property type="evidence" value="ECO:0007669"/>
    <property type="project" value="UniProtKB-KW"/>
</dbReference>
<dbReference type="GO" id="GO:0019843">
    <property type="term" value="F:rRNA binding"/>
    <property type="evidence" value="ECO:0007669"/>
    <property type="project" value="UniProtKB-UniRule"/>
</dbReference>
<dbReference type="GO" id="GO:0003735">
    <property type="term" value="F:structural constituent of ribosome"/>
    <property type="evidence" value="ECO:0007669"/>
    <property type="project" value="InterPro"/>
</dbReference>
<dbReference type="GO" id="GO:0006412">
    <property type="term" value="P:translation"/>
    <property type="evidence" value="ECO:0007669"/>
    <property type="project" value="UniProtKB-UniRule"/>
</dbReference>
<dbReference type="CDD" id="cd06089">
    <property type="entry name" value="KOW_RPL26"/>
    <property type="match status" value="1"/>
</dbReference>
<dbReference type="FunFam" id="2.30.30.30:FF:000004">
    <property type="entry name" value="50S ribosomal protein L24"/>
    <property type="match status" value="1"/>
</dbReference>
<dbReference type="Gene3D" id="2.30.30.30">
    <property type="match status" value="1"/>
</dbReference>
<dbReference type="HAMAP" id="MF_01326_B">
    <property type="entry name" value="Ribosomal_uL24_B"/>
    <property type="match status" value="1"/>
</dbReference>
<dbReference type="InterPro" id="IPR005824">
    <property type="entry name" value="KOW"/>
</dbReference>
<dbReference type="InterPro" id="IPR014722">
    <property type="entry name" value="Rib_uL2_dom2"/>
</dbReference>
<dbReference type="InterPro" id="IPR003256">
    <property type="entry name" value="Ribosomal_uL24"/>
</dbReference>
<dbReference type="InterPro" id="IPR005825">
    <property type="entry name" value="Ribosomal_uL24_CS"/>
</dbReference>
<dbReference type="InterPro" id="IPR041988">
    <property type="entry name" value="Ribosomal_uL24_KOW"/>
</dbReference>
<dbReference type="InterPro" id="IPR008991">
    <property type="entry name" value="Translation_prot_SH3-like_sf"/>
</dbReference>
<dbReference type="NCBIfam" id="TIGR01079">
    <property type="entry name" value="rplX_bact"/>
    <property type="match status" value="1"/>
</dbReference>
<dbReference type="PANTHER" id="PTHR12903">
    <property type="entry name" value="MITOCHONDRIAL RIBOSOMAL PROTEIN L24"/>
    <property type="match status" value="1"/>
</dbReference>
<dbReference type="Pfam" id="PF00467">
    <property type="entry name" value="KOW"/>
    <property type="match status" value="1"/>
</dbReference>
<dbReference type="Pfam" id="PF17136">
    <property type="entry name" value="ribosomal_L24"/>
    <property type="match status" value="1"/>
</dbReference>
<dbReference type="SMART" id="SM00739">
    <property type="entry name" value="KOW"/>
    <property type="match status" value="1"/>
</dbReference>
<dbReference type="SUPFAM" id="SSF50104">
    <property type="entry name" value="Translation proteins SH3-like domain"/>
    <property type="match status" value="1"/>
</dbReference>
<dbReference type="PROSITE" id="PS01108">
    <property type="entry name" value="RIBOSOMAL_L24"/>
    <property type="match status" value="1"/>
</dbReference>
<reference key="1">
    <citation type="journal article" date="2008" name="Genome Biol.">
        <title>Encapsulated in silica: genome, proteome and physiology of the thermophilic bacterium Anoxybacillus flavithermus WK1.</title>
        <authorList>
            <person name="Saw J.H."/>
            <person name="Mountain B.W."/>
            <person name="Feng L."/>
            <person name="Omelchenko M.V."/>
            <person name="Hou S."/>
            <person name="Saito J.A."/>
            <person name="Stott M.B."/>
            <person name="Li D."/>
            <person name="Zhao G."/>
            <person name="Wu J."/>
            <person name="Galperin M.Y."/>
            <person name="Koonin E.V."/>
            <person name="Makarova K.S."/>
            <person name="Wolf Y.I."/>
            <person name="Rigden D.J."/>
            <person name="Dunfield P.F."/>
            <person name="Wang L."/>
            <person name="Alam M."/>
        </authorList>
    </citation>
    <scope>NUCLEOTIDE SEQUENCE [LARGE SCALE GENOMIC DNA]</scope>
    <source>
        <strain>DSM 21510 / WK1</strain>
    </source>
</reference>
<accession>B7GJ78</accession>
<sequence>MHVKKGDKVQVISGKDKGKQGVILAAFPKKNRVLVEGVNIVKKHVKPSQANPQGGIINQEAPIHVSNVMPLDPKTGLPTRVGYKVVDGKKVRYAKRSGEILDK</sequence>
<keyword id="KW-0687">Ribonucleoprotein</keyword>
<keyword id="KW-0689">Ribosomal protein</keyword>
<keyword id="KW-0694">RNA-binding</keyword>
<keyword id="KW-0699">rRNA-binding</keyword>
<comment type="function">
    <text evidence="1">One of two assembly initiator proteins, it binds directly to the 5'-end of the 23S rRNA, where it nucleates assembly of the 50S subunit.</text>
</comment>
<comment type="function">
    <text evidence="1">One of the proteins that surrounds the polypeptide exit tunnel on the outside of the subunit.</text>
</comment>
<comment type="subunit">
    <text evidence="1">Part of the 50S ribosomal subunit.</text>
</comment>
<comment type="similarity">
    <text evidence="1">Belongs to the universal ribosomal protein uL24 family.</text>
</comment>
<feature type="chain" id="PRO_1000141958" description="Large ribosomal subunit protein uL24">
    <location>
        <begin position="1"/>
        <end position="103"/>
    </location>
</feature>
<name>RL24_ANOFW</name>
<evidence type="ECO:0000255" key="1">
    <source>
        <dbReference type="HAMAP-Rule" id="MF_01326"/>
    </source>
</evidence>
<evidence type="ECO:0000305" key="2"/>
<organism>
    <name type="scientific">Anoxybacillus flavithermus (strain DSM 21510 / WK1)</name>
    <dbReference type="NCBI Taxonomy" id="491915"/>
    <lineage>
        <taxon>Bacteria</taxon>
        <taxon>Bacillati</taxon>
        <taxon>Bacillota</taxon>
        <taxon>Bacilli</taxon>
        <taxon>Bacillales</taxon>
        <taxon>Anoxybacillaceae</taxon>
        <taxon>Anoxybacillus</taxon>
    </lineage>
</organism>
<gene>
    <name evidence="1" type="primary">rplX</name>
    <name type="ordered locus">Aflv_0116</name>
</gene>
<proteinExistence type="inferred from homology"/>